<sequence>MSPRLRLQPEAVGIGMTSQRVRDRLVDRLREAGIVDESTLNAIRVVPRHLFIDEALASRAYEDTALPIGHGQTISQPWVVARMTEAVLQVAPKRVLEVGTGSGYQAAVLGALGLEVYTVERIGDLLRQARKRFRALGMNIRTKHDDGRVGWAEHGPFDAIVVTAAAPALVDVLIEQLAEGGRLVAPVGGPSAQSLVQLDRRADGSIEQHVLAPVTFVPLLSGMLD</sequence>
<organism>
    <name type="scientific">Stenotrophomonas maltophilia (strain R551-3)</name>
    <dbReference type="NCBI Taxonomy" id="391008"/>
    <lineage>
        <taxon>Bacteria</taxon>
        <taxon>Pseudomonadati</taxon>
        <taxon>Pseudomonadota</taxon>
        <taxon>Gammaproteobacteria</taxon>
        <taxon>Lysobacterales</taxon>
        <taxon>Lysobacteraceae</taxon>
        <taxon>Stenotrophomonas</taxon>
        <taxon>Stenotrophomonas maltophilia group</taxon>
    </lineage>
</organism>
<gene>
    <name evidence="1" type="primary">pcm</name>
    <name type="ordered locus">Smal_1459</name>
</gene>
<protein>
    <recommendedName>
        <fullName evidence="1">Protein-L-isoaspartate O-methyltransferase</fullName>
        <ecNumber evidence="1">2.1.1.77</ecNumber>
    </recommendedName>
    <alternativeName>
        <fullName evidence="1">L-isoaspartyl protein carboxyl methyltransferase</fullName>
    </alternativeName>
    <alternativeName>
        <fullName evidence="1">Protein L-isoaspartyl methyltransferase</fullName>
    </alternativeName>
    <alternativeName>
        <fullName evidence="1">Protein-beta-aspartate methyltransferase</fullName>
        <shortName evidence="1">PIMT</shortName>
    </alternativeName>
</protein>
<keyword id="KW-0963">Cytoplasm</keyword>
<keyword id="KW-0489">Methyltransferase</keyword>
<keyword id="KW-0949">S-adenosyl-L-methionine</keyword>
<keyword id="KW-0808">Transferase</keyword>
<name>PIMT_STRM5</name>
<proteinExistence type="inferred from homology"/>
<evidence type="ECO:0000255" key="1">
    <source>
        <dbReference type="HAMAP-Rule" id="MF_00090"/>
    </source>
</evidence>
<accession>B4SR93</accession>
<feature type="chain" id="PRO_1000093294" description="Protein-L-isoaspartate O-methyltransferase">
    <location>
        <begin position="1"/>
        <end position="225"/>
    </location>
</feature>
<feature type="active site" evidence="1">
    <location>
        <position position="75"/>
    </location>
</feature>
<dbReference type="EC" id="2.1.1.77" evidence="1"/>
<dbReference type="EMBL" id="CP001111">
    <property type="protein sequence ID" value="ACF51164.1"/>
    <property type="molecule type" value="Genomic_DNA"/>
</dbReference>
<dbReference type="RefSeq" id="WP_012510656.1">
    <property type="nucleotide sequence ID" value="NC_011071.1"/>
</dbReference>
<dbReference type="SMR" id="B4SR93"/>
<dbReference type="STRING" id="391008.Smal_1459"/>
<dbReference type="KEGG" id="smt:Smal_1459"/>
<dbReference type="eggNOG" id="COG2518">
    <property type="taxonomic scope" value="Bacteria"/>
</dbReference>
<dbReference type="HOGENOM" id="CLU_055432_2_0_6"/>
<dbReference type="OrthoDB" id="9810066at2"/>
<dbReference type="Proteomes" id="UP000001867">
    <property type="component" value="Chromosome"/>
</dbReference>
<dbReference type="GO" id="GO:0005737">
    <property type="term" value="C:cytoplasm"/>
    <property type="evidence" value="ECO:0007669"/>
    <property type="project" value="UniProtKB-SubCell"/>
</dbReference>
<dbReference type="GO" id="GO:0004719">
    <property type="term" value="F:protein-L-isoaspartate (D-aspartate) O-methyltransferase activity"/>
    <property type="evidence" value="ECO:0007669"/>
    <property type="project" value="UniProtKB-UniRule"/>
</dbReference>
<dbReference type="GO" id="GO:0032259">
    <property type="term" value="P:methylation"/>
    <property type="evidence" value="ECO:0007669"/>
    <property type="project" value="UniProtKB-KW"/>
</dbReference>
<dbReference type="GO" id="GO:0036211">
    <property type="term" value="P:protein modification process"/>
    <property type="evidence" value="ECO:0007669"/>
    <property type="project" value="UniProtKB-UniRule"/>
</dbReference>
<dbReference type="GO" id="GO:0030091">
    <property type="term" value="P:protein repair"/>
    <property type="evidence" value="ECO:0007669"/>
    <property type="project" value="UniProtKB-UniRule"/>
</dbReference>
<dbReference type="CDD" id="cd02440">
    <property type="entry name" value="AdoMet_MTases"/>
    <property type="match status" value="1"/>
</dbReference>
<dbReference type="FunFam" id="3.40.50.150:FF:000010">
    <property type="entry name" value="Protein-L-isoaspartate O-methyltransferase"/>
    <property type="match status" value="1"/>
</dbReference>
<dbReference type="Gene3D" id="3.40.50.150">
    <property type="entry name" value="Vaccinia Virus protein VP39"/>
    <property type="match status" value="1"/>
</dbReference>
<dbReference type="HAMAP" id="MF_00090">
    <property type="entry name" value="PIMT"/>
    <property type="match status" value="1"/>
</dbReference>
<dbReference type="InterPro" id="IPR000682">
    <property type="entry name" value="PCMT"/>
</dbReference>
<dbReference type="InterPro" id="IPR029063">
    <property type="entry name" value="SAM-dependent_MTases_sf"/>
</dbReference>
<dbReference type="NCBIfam" id="TIGR00080">
    <property type="entry name" value="pimt"/>
    <property type="match status" value="1"/>
</dbReference>
<dbReference type="NCBIfam" id="NF001453">
    <property type="entry name" value="PRK00312.1"/>
    <property type="match status" value="1"/>
</dbReference>
<dbReference type="PANTHER" id="PTHR11579">
    <property type="entry name" value="PROTEIN-L-ISOASPARTATE O-METHYLTRANSFERASE"/>
    <property type="match status" value="1"/>
</dbReference>
<dbReference type="PANTHER" id="PTHR11579:SF0">
    <property type="entry name" value="PROTEIN-L-ISOASPARTATE(D-ASPARTATE) O-METHYLTRANSFERASE"/>
    <property type="match status" value="1"/>
</dbReference>
<dbReference type="Pfam" id="PF01135">
    <property type="entry name" value="PCMT"/>
    <property type="match status" value="1"/>
</dbReference>
<dbReference type="SUPFAM" id="SSF53335">
    <property type="entry name" value="S-adenosyl-L-methionine-dependent methyltransferases"/>
    <property type="match status" value="1"/>
</dbReference>
<dbReference type="PROSITE" id="PS01279">
    <property type="entry name" value="PCMT"/>
    <property type="match status" value="1"/>
</dbReference>
<comment type="function">
    <text evidence="1">Catalyzes the methyl esterification of L-isoaspartyl residues in peptides and proteins that result from spontaneous decomposition of normal L-aspartyl and L-asparaginyl residues. It plays a role in the repair and/or degradation of damaged proteins.</text>
</comment>
<comment type="catalytic activity">
    <reaction evidence="1">
        <text>[protein]-L-isoaspartate + S-adenosyl-L-methionine = [protein]-L-isoaspartate alpha-methyl ester + S-adenosyl-L-homocysteine</text>
        <dbReference type="Rhea" id="RHEA:12705"/>
        <dbReference type="Rhea" id="RHEA-COMP:12143"/>
        <dbReference type="Rhea" id="RHEA-COMP:12144"/>
        <dbReference type="ChEBI" id="CHEBI:57856"/>
        <dbReference type="ChEBI" id="CHEBI:59789"/>
        <dbReference type="ChEBI" id="CHEBI:90596"/>
        <dbReference type="ChEBI" id="CHEBI:90598"/>
        <dbReference type="EC" id="2.1.1.77"/>
    </reaction>
</comment>
<comment type="subcellular location">
    <subcellularLocation>
        <location evidence="1">Cytoplasm</location>
    </subcellularLocation>
</comment>
<comment type="similarity">
    <text evidence="1">Belongs to the methyltransferase superfamily. L-isoaspartyl/D-aspartyl protein methyltransferase family.</text>
</comment>
<reference key="1">
    <citation type="submission" date="2008-06" db="EMBL/GenBank/DDBJ databases">
        <title>Complete sequence of Stenotrophomonas maltophilia R551-3.</title>
        <authorList>
            <consortium name="US DOE Joint Genome Institute"/>
            <person name="Lucas S."/>
            <person name="Copeland A."/>
            <person name="Lapidus A."/>
            <person name="Glavina del Rio T."/>
            <person name="Dalin E."/>
            <person name="Tice H."/>
            <person name="Pitluck S."/>
            <person name="Chain P."/>
            <person name="Malfatti S."/>
            <person name="Shin M."/>
            <person name="Vergez L."/>
            <person name="Lang D."/>
            <person name="Schmutz J."/>
            <person name="Larimer F."/>
            <person name="Land M."/>
            <person name="Hauser L."/>
            <person name="Kyrpides N."/>
            <person name="Mikhailova N."/>
            <person name="Taghavi S."/>
            <person name="Monchy S."/>
            <person name="Newman L."/>
            <person name="Vangronsveld J."/>
            <person name="van der Lelie D."/>
            <person name="Richardson P."/>
        </authorList>
    </citation>
    <scope>NUCLEOTIDE SEQUENCE [LARGE SCALE GENOMIC DNA]</scope>
    <source>
        <strain>R551-3</strain>
    </source>
</reference>